<gene>
    <name evidence="1" type="primary">glpE</name>
    <name type="ordered locus">PP_0398</name>
</gene>
<feature type="chain" id="PRO_0000200560" description="Thiosulfate sulfurtransferase GlpE">
    <location>
        <begin position="1"/>
        <end position="110"/>
    </location>
</feature>
<feature type="domain" description="Rhodanese" evidence="1">
    <location>
        <begin position="17"/>
        <end position="105"/>
    </location>
</feature>
<feature type="active site" description="Cysteine persulfide intermediate" evidence="1">
    <location>
        <position position="65"/>
    </location>
</feature>
<protein>
    <recommendedName>
        <fullName evidence="1">Thiosulfate sulfurtransferase GlpE</fullName>
        <ecNumber evidence="1">2.8.1.1</ecNumber>
    </recommendedName>
</protein>
<name>GLPE_PSEPK</name>
<comment type="function">
    <text evidence="1">Transferase that catalyzes the transfer of sulfur from thiosulfate to thiophilic acceptors such as cyanide or dithiols. May function in a CysM-independent thiosulfate assimilation pathway by catalyzing the conversion of thiosulfate to sulfite, which can then be used for L-cysteine biosynthesis.</text>
</comment>
<comment type="catalytic activity">
    <reaction evidence="1">
        <text>thiosulfate + hydrogen cyanide = thiocyanate + sulfite + 2 H(+)</text>
        <dbReference type="Rhea" id="RHEA:16881"/>
        <dbReference type="ChEBI" id="CHEBI:15378"/>
        <dbReference type="ChEBI" id="CHEBI:17359"/>
        <dbReference type="ChEBI" id="CHEBI:18022"/>
        <dbReference type="ChEBI" id="CHEBI:18407"/>
        <dbReference type="ChEBI" id="CHEBI:33542"/>
        <dbReference type="EC" id="2.8.1.1"/>
    </reaction>
</comment>
<comment type="catalytic activity">
    <reaction evidence="1">
        <text>thiosulfate + [thioredoxin]-dithiol = [thioredoxin]-disulfide + hydrogen sulfide + sulfite + 2 H(+)</text>
        <dbReference type="Rhea" id="RHEA:83859"/>
        <dbReference type="Rhea" id="RHEA-COMP:10698"/>
        <dbReference type="Rhea" id="RHEA-COMP:10700"/>
        <dbReference type="ChEBI" id="CHEBI:15378"/>
        <dbReference type="ChEBI" id="CHEBI:17359"/>
        <dbReference type="ChEBI" id="CHEBI:29919"/>
        <dbReference type="ChEBI" id="CHEBI:29950"/>
        <dbReference type="ChEBI" id="CHEBI:33542"/>
        <dbReference type="ChEBI" id="CHEBI:50058"/>
    </reaction>
</comment>
<comment type="subcellular location">
    <subcellularLocation>
        <location evidence="1">Cytoplasm</location>
    </subcellularLocation>
</comment>
<comment type="similarity">
    <text evidence="1">Belongs to the GlpE family.</text>
</comment>
<proteinExistence type="inferred from homology"/>
<evidence type="ECO:0000255" key="1">
    <source>
        <dbReference type="HAMAP-Rule" id="MF_01009"/>
    </source>
</evidence>
<dbReference type="EC" id="2.8.1.1" evidence="1"/>
<dbReference type="EMBL" id="AE015451">
    <property type="protein sequence ID" value="AAN66029.1"/>
    <property type="molecule type" value="Genomic_DNA"/>
</dbReference>
<dbReference type="RefSeq" id="NP_742565.1">
    <property type="nucleotide sequence ID" value="NC_002947.4"/>
</dbReference>
<dbReference type="RefSeq" id="WP_010951742.1">
    <property type="nucleotide sequence ID" value="NZ_CP169744.1"/>
</dbReference>
<dbReference type="SMR" id="Q88QT9"/>
<dbReference type="STRING" id="160488.PP_0398"/>
<dbReference type="PaxDb" id="160488-PP_0398"/>
<dbReference type="GeneID" id="83677689"/>
<dbReference type="KEGG" id="ppu:PP_0398"/>
<dbReference type="PATRIC" id="fig|160488.4.peg.428"/>
<dbReference type="eggNOG" id="COG0607">
    <property type="taxonomic scope" value="Bacteria"/>
</dbReference>
<dbReference type="HOGENOM" id="CLU_089574_14_0_6"/>
<dbReference type="OrthoDB" id="9811849at2"/>
<dbReference type="PhylomeDB" id="Q88QT9"/>
<dbReference type="BioCyc" id="PPUT160488:G1G01-435-MONOMER"/>
<dbReference type="Proteomes" id="UP000000556">
    <property type="component" value="Chromosome"/>
</dbReference>
<dbReference type="GO" id="GO:0005737">
    <property type="term" value="C:cytoplasm"/>
    <property type="evidence" value="ECO:0007669"/>
    <property type="project" value="UniProtKB-SubCell"/>
</dbReference>
<dbReference type="GO" id="GO:0004792">
    <property type="term" value="F:thiosulfate-cyanide sulfurtransferase activity"/>
    <property type="evidence" value="ECO:0007669"/>
    <property type="project" value="UniProtKB-UniRule"/>
</dbReference>
<dbReference type="GO" id="GO:0006071">
    <property type="term" value="P:glycerol metabolic process"/>
    <property type="evidence" value="ECO:0007669"/>
    <property type="project" value="UniProtKB-UniRule"/>
</dbReference>
<dbReference type="CDD" id="cd01444">
    <property type="entry name" value="GlpE_ST"/>
    <property type="match status" value="1"/>
</dbReference>
<dbReference type="Gene3D" id="3.40.250.10">
    <property type="entry name" value="Rhodanese-like domain"/>
    <property type="match status" value="1"/>
</dbReference>
<dbReference type="HAMAP" id="MF_01009">
    <property type="entry name" value="Thiosulf_sulfurtr"/>
    <property type="match status" value="1"/>
</dbReference>
<dbReference type="InterPro" id="IPR050229">
    <property type="entry name" value="GlpE_sulfurtransferase"/>
</dbReference>
<dbReference type="InterPro" id="IPR001763">
    <property type="entry name" value="Rhodanese-like_dom"/>
</dbReference>
<dbReference type="InterPro" id="IPR036873">
    <property type="entry name" value="Rhodanese-like_dom_sf"/>
</dbReference>
<dbReference type="InterPro" id="IPR023695">
    <property type="entry name" value="Thiosulf_sulfurTrfase"/>
</dbReference>
<dbReference type="NCBIfam" id="NF001195">
    <property type="entry name" value="PRK00162.1"/>
    <property type="match status" value="1"/>
</dbReference>
<dbReference type="PANTHER" id="PTHR43031">
    <property type="entry name" value="FAD-DEPENDENT OXIDOREDUCTASE"/>
    <property type="match status" value="1"/>
</dbReference>
<dbReference type="PANTHER" id="PTHR43031:SF6">
    <property type="entry name" value="THIOSULFATE SULFURTRANSFERASE GLPE"/>
    <property type="match status" value="1"/>
</dbReference>
<dbReference type="Pfam" id="PF00581">
    <property type="entry name" value="Rhodanese"/>
    <property type="match status" value="1"/>
</dbReference>
<dbReference type="SMART" id="SM00450">
    <property type="entry name" value="RHOD"/>
    <property type="match status" value="1"/>
</dbReference>
<dbReference type="SUPFAM" id="SSF52821">
    <property type="entry name" value="Rhodanese/Cell cycle control phosphatase"/>
    <property type="match status" value="1"/>
</dbReference>
<dbReference type="PROSITE" id="PS50206">
    <property type="entry name" value="RHODANESE_3"/>
    <property type="match status" value="1"/>
</dbReference>
<accession>Q88QT9</accession>
<reference key="1">
    <citation type="journal article" date="2002" name="Environ. Microbiol.">
        <title>Complete genome sequence and comparative analysis of the metabolically versatile Pseudomonas putida KT2440.</title>
        <authorList>
            <person name="Nelson K.E."/>
            <person name="Weinel C."/>
            <person name="Paulsen I.T."/>
            <person name="Dodson R.J."/>
            <person name="Hilbert H."/>
            <person name="Martins dos Santos V.A.P."/>
            <person name="Fouts D.E."/>
            <person name="Gill S.R."/>
            <person name="Pop M."/>
            <person name="Holmes M."/>
            <person name="Brinkac L.M."/>
            <person name="Beanan M.J."/>
            <person name="DeBoy R.T."/>
            <person name="Daugherty S.C."/>
            <person name="Kolonay J.F."/>
            <person name="Madupu R."/>
            <person name="Nelson W.C."/>
            <person name="White O."/>
            <person name="Peterson J.D."/>
            <person name="Khouri H.M."/>
            <person name="Hance I."/>
            <person name="Chris Lee P."/>
            <person name="Holtzapple E.K."/>
            <person name="Scanlan D."/>
            <person name="Tran K."/>
            <person name="Moazzez A."/>
            <person name="Utterback T.R."/>
            <person name="Rizzo M."/>
            <person name="Lee K."/>
            <person name="Kosack D."/>
            <person name="Moestl D."/>
            <person name="Wedler H."/>
            <person name="Lauber J."/>
            <person name="Stjepandic D."/>
            <person name="Hoheisel J."/>
            <person name="Straetz M."/>
            <person name="Heim S."/>
            <person name="Kiewitz C."/>
            <person name="Eisen J.A."/>
            <person name="Timmis K.N."/>
            <person name="Duesterhoeft A."/>
            <person name="Tuemmler B."/>
            <person name="Fraser C.M."/>
        </authorList>
    </citation>
    <scope>NUCLEOTIDE SEQUENCE [LARGE SCALE GENOMIC DNA]</scope>
    <source>
        <strain>ATCC 47054 / DSM 6125 / CFBP 8728 / NCIMB 11950 / KT2440</strain>
    </source>
</reference>
<sequence length="110" mass="11906">MSEFKRIPPEQALELRKKEGAVVVDIRDPQAFAAGHITGARHLDNHSVADFIRNADLDAPTLVVCYHGNSSQSAAAYLVGQGFSDVYSVDGGFELWRATYPAETAQGNAE</sequence>
<keyword id="KW-0963">Cytoplasm</keyword>
<keyword id="KW-1185">Reference proteome</keyword>
<keyword id="KW-0808">Transferase</keyword>
<organism>
    <name type="scientific">Pseudomonas putida (strain ATCC 47054 / DSM 6125 / CFBP 8728 / NCIMB 11950 / KT2440)</name>
    <dbReference type="NCBI Taxonomy" id="160488"/>
    <lineage>
        <taxon>Bacteria</taxon>
        <taxon>Pseudomonadati</taxon>
        <taxon>Pseudomonadota</taxon>
        <taxon>Gammaproteobacteria</taxon>
        <taxon>Pseudomonadales</taxon>
        <taxon>Pseudomonadaceae</taxon>
        <taxon>Pseudomonas</taxon>
    </lineage>
</organism>